<reference key="1">
    <citation type="journal article" date="1996" name="Dev. Biol.">
        <title>Platelet-activating factor acetylhydrolase expression and activity suggest a link between neuronal migration and platelet-activating factor.</title>
        <authorList>
            <person name="Albrecht U."/>
            <person name="Abu-Issa R."/>
            <person name="Raetz B."/>
            <person name="Hattori M."/>
            <person name="Aoki J."/>
            <person name="Arai H."/>
            <person name="Inoue K."/>
            <person name="Eichele G."/>
        </authorList>
    </citation>
    <scope>NUCLEOTIDE SEQUENCE [MRNA]</scope>
    <source>
        <strain>BALB/cJ</strain>
    </source>
</reference>
<reference key="2">
    <citation type="journal article" date="2005" name="Science">
        <title>The transcriptional landscape of the mammalian genome.</title>
        <authorList>
            <person name="Carninci P."/>
            <person name="Kasukawa T."/>
            <person name="Katayama S."/>
            <person name="Gough J."/>
            <person name="Frith M.C."/>
            <person name="Maeda N."/>
            <person name="Oyama R."/>
            <person name="Ravasi T."/>
            <person name="Lenhard B."/>
            <person name="Wells C."/>
            <person name="Kodzius R."/>
            <person name="Shimokawa K."/>
            <person name="Bajic V.B."/>
            <person name="Brenner S.E."/>
            <person name="Batalov S."/>
            <person name="Forrest A.R."/>
            <person name="Zavolan M."/>
            <person name="Davis M.J."/>
            <person name="Wilming L.G."/>
            <person name="Aidinis V."/>
            <person name="Allen J.E."/>
            <person name="Ambesi-Impiombato A."/>
            <person name="Apweiler R."/>
            <person name="Aturaliya R.N."/>
            <person name="Bailey T.L."/>
            <person name="Bansal M."/>
            <person name="Baxter L."/>
            <person name="Beisel K.W."/>
            <person name="Bersano T."/>
            <person name="Bono H."/>
            <person name="Chalk A.M."/>
            <person name="Chiu K.P."/>
            <person name="Choudhary V."/>
            <person name="Christoffels A."/>
            <person name="Clutterbuck D.R."/>
            <person name="Crowe M.L."/>
            <person name="Dalla E."/>
            <person name="Dalrymple B.P."/>
            <person name="de Bono B."/>
            <person name="Della Gatta G."/>
            <person name="di Bernardo D."/>
            <person name="Down T."/>
            <person name="Engstrom P."/>
            <person name="Fagiolini M."/>
            <person name="Faulkner G."/>
            <person name="Fletcher C.F."/>
            <person name="Fukushima T."/>
            <person name="Furuno M."/>
            <person name="Futaki S."/>
            <person name="Gariboldi M."/>
            <person name="Georgii-Hemming P."/>
            <person name="Gingeras T.R."/>
            <person name="Gojobori T."/>
            <person name="Green R.E."/>
            <person name="Gustincich S."/>
            <person name="Harbers M."/>
            <person name="Hayashi Y."/>
            <person name="Hensch T.K."/>
            <person name="Hirokawa N."/>
            <person name="Hill D."/>
            <person name="Huminiecki L."/>
            <person name="Iacono M."/>
            <person name="Ikeo K."/>
            <person name="Iwama A."/>
            <person name="Ishikawa T."/>
            <person name="Jakt M."/>
            <person name="Kanapin A."/>
            <person name="Katoh M."/>
            <person name="Kawasawa Y."/>
            <person name="Kelso J."/>
            <person name="Kitamura H."/>
            <person name="Kitano H."/>
            <person name="Kollias G."/>
            <person name="Krishnan S.P."/>
            <person name="Kruger A."/>
            <person name="Kummerfeld S.K."/>
            <person name="Kurochkin I.V."/>
            <person name="Lareau L.F."/>
            <person name="Lazarevic D."/>
            <person name="Lipovich L."/>
            <person name="Liu J."/>
            <person name="Liuni S."/>
            <person name="McWilliam S."/>
            <person name="Madan Babu M."/>
            <person name="Madera M."/>
            <person name="Marchionni L."/>
            <person name="Matsuda H."/>
            <person name="Matsuzawa S."/>
            <person name="Miki H."/>
            <person name="Mignone F."/>
            <person name="Miyake S."/>
            <person name="Morris K."/>
            <person name="Mottagui-Tabar S."/>
            <person name="Mulder N."/>
            <person name="Nakano N."/>
            <person name="Nakauchi H."/>
            <person name="Ng P."/>
            <person name="Nilsson R."/>
            <person name="Nishiguchi S."/>
            <person name="Nishikawa S."/>
            <person name="Nori F."/>
            <person name="Ohara O."/>
            <person name="Okazaki Y."/>
            <person name="Orlando V."/>
            <person name="Pang K.C."/>
            <person name="Pavan W.J."/>
            <person name="Pavesi G."/>
            <person name="Pesole G."/>
            <person name="Petrovsky N."/>
            <person name="Piazza S."/>
            <person name="Reed J."/>
            <person name="Reid J.F."/>
            <person name="Ring B.Z."/>
            <person name="Ringwald M."/>
            <person name="Rost B."/>
            <person name="Ruan Y."/>
            <person name="Salzberg S.L."/>
            <person name="Sandelin A."/>
            <person name="Schneider C."/>
            <person name="Schoenbach C."/>
            <person name="Sekiguchi K."/>
            <person name="Semple C.A."/>
            <person name="Seno S."/>
            <person name="Sessa L."/>
            <person name="Sheng Y."/>
            <person name="Shibata Y."/>
            <person name="Shimada H."/>
            <person name="Shimada K."/>
            <person name="Silva D."/>
            <person name="Sinclair B."/>
            <person name="Sperling S."/>
            <person name="Stupka E."/>
            <person name="Sugiura K."/>
            <person name="Sultana R."/>
            <person name="Takenaka Y."/>
            <person name="Taki K."/>
            <person name="Tammoja K."/>
            <person name="Tan S.L."/>
            <person name="Tang S."/>
            <person name="Taylor M.S."/>
            <person name="Tegner J."/>
            <person name="Teichmann S.A."/>
            <person name="Ueda H.R."/>
            <person name="van Nimwegen E."/>
            <person name="Verardo R."/>
            <person name="Wei C.L."/>
            <person name="Yagi K."/>
            <person name="Yamanishi H."/>
            <person name="Zabarovsky E."/>
            <person name="Zhu S."/>
            <person name="Zimmer A."/>
            <person name="Hide W."/>
            <person name="Bult C."/>
            <person name="Grimmond S.M."/>
            <person name="Teasdale R.D."/>
            <person name="Liu E.T."/>
            <person name="Brusic V."/>
            <person name="Quackenbush J."/>
            <person name="Wahlestedt C."/>
            <person name="Mattick J.S."/>
            <person name="Hume D.A."/>
            <person name="Kai C."/>
            <person name="Sasaki D."/>
            <person name="Tomaru Y."/>
            <person name="Fukuda S."/>
            <person name="Kanamori-Katayama M."/>
            <person name="Suzuki M."/>
            <person name="Aoki J."/>
            <person name="Arakawa T."/>
            <person name="Iida J."/>
            <person name="Imamura K."/>
            <person name="Itoh M."/>
            <person name="Kato T."/>
            <person name="Kawaji H."/>
            <person name="Kawagashira N."/>
            <person name="Kawashima T."/>
            <person name="Kojima M."/>
            <person name="Kondo S."/>
            <person name="Konno H."/>
            <person name="Nakano K."/>
            <person name="Ninomiya N."/>
            <person name="Nishio T."/>
            <person name="Okada M."/>
            <person name="Plessy C."/>
            <person name="Shibata K."/>
            <person name="Shiraki T."/>
            <person name="Suzuki S."/>
            <person name="Tagami M."/>
            <person name="Waki K."/>
            <person name="Watahiki A."/>
            <person name="Okamura-Oho Y."/>
            <person name="Suzuki H."/>
            <person name="Kawai J."/>
            <person name="Hayashizaki Y."/>
        </authorList>
    </citation>
    <scope>NUCLEOTIDE SEQUENCE [LARGE SCALE MRNA]</scope>
    <source>
        <strain>C57BL/6J</strain>
        <tissue>Bone marrow</tissue>
    </source>
</reference>
<reference key="3">
    <citation type="journal article" date="2004" name="Genome Res.">
        <title>The status, quality, and expansion of the NIH full-length cDNA project: the Mammalian Gene Collection (MGC).</title>
        <authorList>
            <consortium name="The MGC Project Team"/>
        </authorList>
    </citation>
    <scope>NUCLEOTIDE SEQUENCE [LARGE SCALE MRNA]</scope>
    <source>
        <strain>C57BL/6J</strain>
        <strain>FVB/N</strain>
        <tissue>Embryo</tissue>
        <tissue>Mammary tumor</tissue>
    </source>
</reference>
<reference key="4">
    <citation type="submission" date="2007-03" db="UniProtKB">
        <authorList>
            <person name="Lubec G."/>
            <person name="Klug S."/>
        </authorList>
    </citation>
    <scope>PROTEIN SEQUENCE OF 61-79 AND 134-142</scope>
    <scope>IDENTIFICATION BY MASS SPECTROMETRY</scope>
    <source>
        <tissue>Hippocampus</tissue>
    </source>
</reference>
<reference key="5">
    <citation type="journal article" date="2003" name="Proc. Natl. Acad. Sci. U.S.A.">
        <title>Previously uncharacterized roles of platelet-activating factor acetylhydrolase 1b complex in mouse spermatogenesis.</title>
        <authorList>
            <person name="Yan W."/>
            <person name="Assadi A.H."/>
            <person name="Wynshaw-Boris A."/>
            <person name="Eichele G."/>
            <person name="Matzuk M.M."/>
            <person name="Clark G.D."/>
        </authorList>
    </citation>
    <scope>DISRUPTION PHENOTYPE</scope>
    <scope>FUNCTION</scope>
</reference>
<reference key="6">
    <citation type="journal article" date="2007" name="PLoS ONE">
        <title>The Pafah1b complex interacts with the reelin receptor VLDLR.</title>
        <authorList>
            <person name="Zhang G."/>
            <person name="Assadi A.H."/>
            <person name="McNeil R.S."/>
            <person name="Beffert U."/>
            <person name="Wynshaw-Boris A."/>
            <person name="Herz J."/>
            <person name="Clark G.D."/>
            <person name="D'Arcangelo G."/>
        </authorList>
    </citation>
    <scope>INTERACTION WITH VLDLR</scope>
</reference>
<reference key="7">
    <citation type="journal article" date="2010" name="Cell">
        <title>A tissue-specific atlas of mouse protein phosphorylation and expression.</title>
        <authorList>
            <person name="Huttlin E.L."/>
            <person name="Jedrychowski M.P."/>
            <person name="Elias J.E."/>
            <person name="Goswami T."/>
            <person name="Rad R."/>
            <person name="Beausoleil S.A."/>
            <person name="Villen J."/>
            <person name="Haas W."/>
            <person name="Sowa M.E."/>
            <person name="Gygi S.P."/>
        </authorList>
    </citation>
    <scope>PHOSPHORYLATION [LARGE SCALE ANALYSIS] AT SER-64 AND THR-220</scope>
    <scope>IDENTIFICATION BY MASS SPECTROMETRY [LARGE SCALE ANALYSIS]</scope>
    <source>
        <tissue>Brain</tissue>
        <tissue>Brown adipose tissue</tissue>
        <tissue>Heart</tissue>
        <tissue>Kidney</tissue>
        <tissue>Liver</tissue>
        <tissue>Lung</tissue>
        <tissue>Pancreas</tissue>
        <tissue>Spleen</tissue>
        <tissue>Testis</tissue>
    </source>
</reference>
<name>PA1B2_MOUSE</name>
<organism>
    <name type="scientific">Mus musculus</name>
    <name type="common">Mouse</name>
    <dbReference type="NCBI Taxonomy" id="10090"/>
    <lineage>
        <taxon>Eukaryota</taxon>
        <taxon>Metazoa</taxon>
        <taxon>Chordata</taxon>
        <taxon>Craniata</taxon>
        <taxon>Vertebrata</taxon>
        <taxon>Euteleostomi</taxon>
        <taxon>Mammalia</taxon>
        <taxon>Eutheria</taxon>
        <taxon>Euarchontoglires</taxon>
        <taxon>Glires</taxon>
        <taxon>Rodentia</taxon>
        <taxon>Myomorpha</taxon>
        <taxon>Muroidea</taxon>
        <taxon>Muridae</taxon>
        <taxon>Murinae</taxon>
        <taxon>Mus</taxon>
        <taxon>Mus</taxon>
    </lineage>
</organism>
<sequence>MSQGDSNPAAIPHAAEDIQGDDRWMSQHNRFVLDCKDKEPDVLFVGDSMVQLMQQYEIWRELFSPLHALNFGIGGDTTRHVLWRLKNGELENIKPKVIVVWVGTNNHENTAEEVAGGIEAIVQLINTRQPQAKIIVLGLLPRGEKPNPLRQKNAKVNQLLKVSLPKLANVQLLDIDGGFVHSDGAISCHDMFDFLHLTGGGYAKICKPLHELIMQLLEETPEEKQTTIA</sequence>
<keyword id="KW-0007">Acetylation</keyword>
<keyword id="KW-0963">Cytoplasm</keyword>
<keyword id="KW-0903">Direct protein sequencing</keyword>
<keyword id="KW-0378">Hydrolase</keyword>
<keyword id="KW-0442">Lipid degradation</keyword>
<keyword id="KW-0443">Lipid metabolism</keyword>
<keyword id="KW-0597">Phosphoprotein</keyword>
<keyword id="KW-1185">Reference proteome</keyword>
<gene>
    <name evidence="10" type="primary">Pafah1b2</name>
    <name type="synonym">Pafahb</name>
</gene>
<comment type="function">
    <text evidence="3 7">Alpha2 catalytic subunit of the cytosolic type I platelet-activating factor (PAF) acetylhydrolase (PAF-AH (I)) heterotetrameric enzyme that catalyzes the hydrolyze of the acetyl group at the sn-2 position of PAF and its analogs and modulates the action of PAF. The activity and substrate specificity of PAF-AH (I) are affected by its subunit composition. The alpha2/alpha2 homodimer (PAFAH1B2/PAFAH1B2 homodimer) hydrolyzes PAF and 1-O-alkyl-2-acetyl-sn-glycero-3-phosphorylethanolamine (AAGPE) more efficiently than 1-O-alkyl-2-acetyl-sn-glycero-3-phosphoric acid (AAGPA). In contrast, the alpha1/alpha2 heterodimer(PAFAH1B3/PAFAH1B3 heterodimer) hydrolyzes AAGPA more efficiently than PAF, but has little hydrolytic activity towards AAGPE (By similarity). May play a role in male germ cell meiosis during the late pachytenestage and meiotic divisions as well as early spermiogenesis (PubMed:12775763).</text>
</comment>
<comment type="catalytic activity">
    <reaction evidence="3">
        <text>a 1-O-alkyl-2-acetyl-sn-glycero-3-phosphocholine + H2O = a 1-O-alkyl-sn-glycero-3-phosphocholine + acetate + H(+)</text>
        <dbReference type="Rhea" id="RHEA:17777"/>
        <dbReference type="ChEBI" id="CHEBI:15377"/>
        <dbReference type="ChEBI" id="CHEBI:15378"/>
        <dbReference type="ChEBI" id="CHEBI:30089"/>
        <dbReference type="ChEBI" id="CHEBI:30909"/>
        <dbReference type="ChEBI" id="CHEBI:36707"/>
        <dbReference type="EC" id="3.1.1.47"/>
    </reaction>
    <physiologicalReaction direction="left-to-right" evidence="3">
        <dbReference type="Rhea" id="RHEA:17778"/>
    </physiologicalReaction>
</comment>
<comment type="catalytic activity">
    <reaction evidence="3">
        <text>1-O-hexadecyl-2-acetyl-sn-glycero-3-phosphocholine + H2O = 1-O-hexadecyl-sn-glycero-3-phosphocholine + acetate + H(+)</text>
        <dbReference type="Rhea" id="RHEA:40479"/>
        <dbReference type="ChEBI" id="CHEBI:15377"/>
        <dbReference type="ChEBI" id="CHEBI:15378"/>
        <dbReference type="ChEBI" id="CHEBI:30089"/>
        <dbReference type="ChEBI" id="CHEBI:44811"/>
        <dbReference type="ChEBI" id="CHEBI:64496"/>
    </reaction>
    <physiologicalReaction direction="left-to-right" evidence="3">
        <dbReference type="Rhea" id="RHEA:40480"/>
    </physiologicalReaction>
</comment>
<comment type="catalytic activity">
    <reaction evidence="3">
        <text>1-O-hexadecyl-2-acetyl-sn-glycero-3-phosphate + H2O = 1-O-hexadecyl-sn-glycero-3-phosphate + acetate + H(+)</text>
        <dbReference type="Rhea" id="RHEA:41704"/>
        <dbReference type="ChEBI" id="CHEBI:15377"/>
        <dbReference type="ChEBI" id="CHEBI:15378"/>
        <dbReference type="ChEBI" id="CHEBI:30089"/>
        <dbReference type="ChEBI" id="CHEBI:77580"/>
        <dbReference type="ChEBI" id="CHEBI:78385"/>
    </reaction>
    <physiologicalReaction direction="left-to-right" evidence="3">
        <dbReference type="Rhea" id="RHEA:41705"/>
    </physiologicalReaction>
</comment>
<comment type="catalytic activity">
    <reaction evidence="3">
        <text>1-O-hexadecyl-2-acetyl-sn-glycero-3-phosphoethanolamine + H2O = 1-O-hexadecyl-sn-glycero-3-phosphoethanolamine + acetate + H(+)</text>
        <dbReference type="Rhea" id="RHEA:41708"/>
        <dbReference type="ChEBI" id="CHEBI:15377"/>
        <dbReference type="ChEBI" id="CHEBI:15378"/>
        <dbReference type="ChEBI" id="CHEBI:30089"/>
        <dbReference type="ChEBI" id="CHEBI:78387"/>
        <dbReference type="ChEBI" id="CHEBI:78390"/>
    </reaction>
    <physiologicalReaction direction="left-to-right" evidence="3">
        <dbReference type="Rhea" id="RHEA:41709"/>
    </physiologicalReaction>
</comment>
<comment type="activity regulation">
    <text evidence="3">Beta subunit (PAFAH1B1) stimulates the acetylhydrolase activity of the alpha2/alpha2 catalytic homodimer.</text>
</comment>
<comment type="subunit">
    <text evidence="3 4 8">Forms a catalytic dimer which is either homodimer (alpha2/alpha2 homodimer) or heterodimer with PAFAH1B3 (alpha2/alpha1 heterodimer). Component of the cytosolic (PAF-AH (I)) heterotetrameric enzyme, which is composed of PAFAH1B1 (beta), PAFAH1B2 (alpha2) and PAFAH1B3 (alpha1) subunits. The catalytic activity of the enzyme resides in the alpha1 (PAFAH1B3) and alpha2 (PAFAH1B2) subunits, whereas the beta subunit (PAFAH1B1) has regulatory activity. Trimer formation is not essential for the catalytic activity (By similarity). Interacts (homodimer form) with PAFAH1B1 (homodimer form); PAFAH1B2 competes with NDEL1 for PAFAH1B1 binding (By similarity). Interacts with VLDLR; this interaction may modulate the Reelin pathway (PubMed:17330141).</text>
</comment>
<comment type="interaction">
    <interactant intactId="EBI-7445518">
        <id>Q61206</id>
    </interactant>
    <interactant intactId="EBI-911192">
        <id>O35685</id>
        <label>Nudc</label>
    </interactant>
    <organismsDiffer>false</organismsDiffer>
    <experiments>2</experiments>
</comment>
<comment type="subcellular location">
    <subcellularLocation>
        <location>Cytoplasm</location>
    </subcellularLocation>
</comment>
<comment type="developmental stage">
    <text>Expressed already by the time of neurulation. By 10.5 dpc, expression is abundant in the developing central and peripheral nervous systems. Major sites include the neuroepithelium of the fore-, mid-, and hindbrain, the spinal cord, the dorsal root, and cranial ganglia.</text>
</comment>
<comment type="disruption phenotype">
    <text evidence="7">Knockout mice which are homozygous for the PAFAH1B2 gene appear developmentally normal, and are born at the expected Mendelian rate (PubMed:12775763). Females bred normally, whereas male are infertile, and spermatogenesis is disrupted at mid- or late pachytene stages of meiosis or early spermiogenesis (PubMed:12775763). Double mutant female mice which are homozygous for PAFAH1B2 and PAFAH1B3 are grossly normal and fertile, whereas double-mutant males are infertile. Double mutan mice manifest an earlier disturbance of spermatogenesis with an onset at preleptotene or leptotene stages of meiosis (PubMed:12775763).</text>
</comment>
<comment type="miscellaneous">
    <text evidence="2 4 5 6">Originally the subunits of the type I platelet-activating factor (PAF) acetylhydrolase was named alpha (PAFAH1B1), beta (PAFAH1B2) and gamma (PAFAH1B3) (By similarity). Now these subunits have been renamed beta (PAFAH1B1), alpha2 (PAFAH1B2) and alpha1 (PAFAH1B3) respectively (By similarity).</text>
</comment>
<comment type="similarity">
    <text evidence="9">Belongs to the 'GDSL' lipolytic enzyme family. Platelet-activating factor acetylhydrolase IB beta/gamma subunits subfamily.</text>
</comment>
<evidence type="ECO:0000250" key="1"/>
<evidence type="ECO:0000250" key="2">
    <source>
        <dbReference type="UniProtKB" id="P43034"/>
    </source>
</evidence>
<evidence type="ECO:0000250" key="3">
    <source>
        <dbReference type="UniProtKB" id="P68401"/>
    </source>
</evidence>
<evidence type="ECO:0000250" key="4">
    <source>
        <dbReference type="UniProtKB" id="P68402"/>
    </source>
</evidence>
<evidence type="ECO:0000250" key="5">
    <source>
        <dbReference type="UniProtKB" id="Q15102"/>
    </source>
</evidence>
<evidence type="ECO:0000250" key="6">
    <source>
        <dbReference type="UniProtKB" id="Q29460"/>
    </source>
</evidence>
<evidence type="ECO:0000269" key="7">
    <source>
    </source>
</evidence>
<evidence type="ECO:0000269" key="8">
    <source>
    </source>
</evidence>
<evidence type="ECO:0000305" key="9"/>
<evidence type="ECO:0000312" key="10">
    <source>
        <dbReference type="MGI" id="MGI:108415"/>
    </source>
</evidence>
<evidence type="ECO:0007744" key="11">
    <source>
    </source>
</evidence>
<accession>Q61206</accession>
<accession>Q6PKE6</accession>
<accession>Q7TNP3</accession>
<feature type="initiator methionine" description="Removed" evidence="4">
    <location>
        <position position="1"/>
    </location>
</feature>
<feature type="chain" id="PRO_0000058152" description="Platelet-activating factor acetylhydrolase IB subunit alpha2">
    <location>
        <begin position="2"/>
        <end position="229"/>
    </location>
</feature>
<feature type="active site" evidence="1">
    <location>
        <position position="48"/>
    </location>
</feature>
<feature type="active site" evidence="1">
    <location>
        <position position="193"/>
    </location>
</feature>
<feature type="active site" evidence="1">
    <location>
        <position position="196"/>
    </location>
</feature>
<feature type="modified residue" description="N-acetylserine" evidence="4">
    <location>
        <position position="2"/>
    </location>
</feature>
<feature type="modified residue" description="Phosphoserine" evidence="4">
    <location>
        <position position="2"/>
    </location>
</feature>
<feature type="modified residue" description="Phosphoserine" evidence="11">
    <location>
        <position position="64"/>
    </location>
</feature>
<feature type="modified residue" description="Phosphothreonine" evidence="11">
    <location>
        <position position="220"/>
    </location>
</feature>
<feature type="sequence conflict" description="In Ref. 1; AAC52997." evidence="9" ref="1">
    <original>QP</original>
    <variation>HA</variation>
    <location>
        <begin position="129"/>
        <end position="130"/>
    </location>
</feature>
<feature type="sequence conflict" description="In Ref. 3; AAH56211." evidence="9" ref="3">
    <original>C</original>
    <variation>W</variation>
    <location>
        <position position="188"/>
    </location>
</feature>
<feature type="sequence conflict" description="In Ref. 1; AAC52997." evidence="9" ref="1">
    <original>E</original>
    <variation>G</variation>
    <location>
        <position position="222"/>
    </location>
</feature>
<protein>
    <recommendedName>
        <fullName evidence="9">Platelet-activating factor acetylhydrolase IB subunit alpha2</fullName>
        <ecNumber evidence="3">3.1.1.47</ecNumber>
    </recommendedName>
    <alternativeName>
        <fullName>PAF acetylhydrolase 30 kDa subunit</fullName>
        <shortName>PAF-AH 30 kDa subunit</shortName>
    </alternativeName>
    <alternativeName>
        <fullName>PAF-AH subunit beta</fullName>
        <shortName>PAFAH subunit beta</shortName>
    </alternativeName>
</protein>
<dbReference type="EC" id="3.1.1.47" evidence="3"/>
<dbReference type="EMBL" id="U57747">
    <property type="protein sequence ID" value="AAC52997.1"/>
    <property type="molecule type" value="mRNA"/>
</dbReference>
<dbReference type="EMBL" id="AK153424">
    <property type="protein sequence ID" value="BAE31983.1"/>
    <property type="molecule type" value="mRNA"/>
</dbReference>
<dbReference type="EMBL" id="BC002037">
    <property type="protein sequence ID" value="AAH02037.1"/>
    <property type="molecule type" value="mRNA"/>
</dbReference>
<dbReference type="EMBL" id="BC056211">
    <property type="protein sequence ID" value="AAH56211.1"/>
    <property type="molecule type" value="mRNA"/>
</dbReference>
<dbReference type="CCDS" id="CCDS23139.1"/>
<dbReference type="RefSeq" id="NP_001344170.1">
    <property type="nucleotide sequence ID" value="NM_001357241.1"/>
</dbReference>
<dbReference type="RefSeq" id="NP_001344172.1">
    <property type="nucleotide sequence ID" value="NM_001357243.1"/>
</dbReference>
<dbReference type="RefSeq" id="NP_001344173.1">
    <property type="nucleotide sequence ID" value="NM_001357244.1"/>
</dbReference>
<dbReference type="RefSeq" id="NP_001344174.1">
    <property type="nucleotide sequence ID" value="NM_001357245.1"/>
</dbReference>
<dbReference type="RefSeq" id="NP_032801.2">
    <property type="nucleotide sequence ID" value="NM_008775.3"/>
</dbReference>
<dbReference type="RefSeq" id="XP_006510147.1">
    <property type="nucleotide sequence ID" value="XM_006510084.3"/>
</dbReference>
<dbReference type="RefSeq" id="XP_006510148.1">
    <property type="nucleotide sequence ID" value="XM_006510085.1"/>
</dbReference>
<dbReference type="RefSeq" id="XP_017168698.1">
    <property type="nucleotide sequence ID" value="XM_017313209.1"/>
</dbReference>
<dbReference type="SMR" id="Q61206"/>
<dbReference type="BioGRID" id="202016">
    <property type="interactions" value="6"/>
</dbReference>
<dbReference type="FunCoup" id="Q61206">
    <property type="interactions" value="4341"/>
</dbReference>
<dbReference type="IntAct" id="Q61206">
    <property type="interactions" value="3"/>
</dbReference>
<dbReference type="MINT" id="Q61206"/>
<dbReference type="STRING" id="10090.ENSMUSP00000127851"/>
<dbReference type="BindingDB" id="Q61206"/>
<dbReference type="ChEMBL" id="CHEMBL3259481"/>
<dbReference type="GlyGen" id="Q61206">
    <property type="glycosylation" value="1 site, 1 O-linked glycan (1 site)"/>
</dbReference>
<dbReference type="iPTMnet" id="Q61206"/>
<dbReference type="PhosphoSitePlus" id="Q61206"/>
<dbReference type="SwissPalm" id="Q61206"/>
<dbReference type="REPRODUCTION-2DPAGE" id="IPI00118821"/>
<dbReference type="REPRODUCTION-2DPAGE" id="Q61206"/>
<dbReference type="jPOST" id="Q61206"/>
<dbReference type="PaxDb" id="10090-ENSMUSP00000127851"/>
<dbReference type="PeptideAtlas" id="Q61206"/>
<dbReference type="ProteomicsDB" id="294315"/>
<dbReference type="Pumba" id="Q61206"/>
<dbReference type="Antibodypedia" id="32310">
    <property type="antibodies" value="242 antibodies from 26 providers"/>
</dbReference>
<dbReference type="DNASU" id="18475"/>
<dbReference type="Ensembl" id="ENSMUST00000172450.3">
    <property type="protein sequence ID" value="ENSMUSP00000127851.2"/>
    <property type="gene ID" value="ENSMUSG00000003131.8"/>
</dbReference>
<dbReference type="Ensembl" id="ENSMUST00000214179.2">
    <property type="protein sequence ID" value="ENSMUSP00000149819.2"/>
    <property type="gene ID" value="ENSMUSG00000003131.8"/>
</dbReference>
<dbReference type="GeneID" id="18475"/>
<dbReference type="KEGG" id="mmu:18475"/>
<dbReference type="UCSC" id="uc009pgx.1">
    <property type="organism name" value="mouse"/>
</dbReference>
<dbReference type="AGR" id="MGI:108415"/>
<dbReference type="CTD" id="5049"/>
<dbReference type="MGI" id="MGI:108415">
    <property type="gene designation" value="Pafah1b2"/>
</dbReference>
<dbReference type="VEuPathDB" id="HostDB:ENSMUSG00000003131"/>
<dbReference type="eggNOG" id="KOG1388">
    <property type="taxonomic scope" value="Eukaryota"/>
</dbReference>
<dbReference type="GeneTree" id="ENSGT00950000183199"/>
<dbReference type="HOGENOM" id="CLU_051989_2_0_1"/>
<dbReference type="InParanoid" id="Q61206"/>
<dbReference type="OMA" id="AWNQYFA"/>
<dbReference type="OrthoDB" id="505607at2759"/>
<dbReference type="PhylomeDB" id="Q61206"/>
<dbReference type="TreeFam" id="TF323955"/>
<dbReference type="BRENDA" id="3.1.1.47">
    <property type="organism ID" value="3474"/>
</dbReference>
<dbReference type="Reactome" id="R-MMU-6798695">
    <property type="pathway name" value="Neutrophil degranulation"/>
</dbReference>
<dbReference type="Reactome" id="R-MMU-6811436">
    <property type="pathway name" value="COPI-independent Golgi-to-ER retrograde traffic"/>
</dbReference>
<dbReference type="BioGRID-ORCS" id="18475">
    <property type="hits" value="4 hits in 80 CRISPR screens"/>
</dbReference>
<dbReference type="ChiTaRS" id="Pafah1b2">
    <property type="organism name" value="mouse"/>
</dbReference>
<dbReference type="PRO" id="PR:Q61206"/>
<dbReference type="Proteomes" id="UP000000589">
    <property type="component" value="Chromosome 9"/>
</dbReference>
<dbReference type="RNAct" id="Q61206">
    <property type="molecule type" value="protein"/>
</dbReference>
<dbReference type="Bgee" id="ENSMUSG00000003131">
    <property type="expression patterns" value="Expressed in spermatid and 287 other cell types or tissues"/>
</dbReference>
<dbReference type="ExpressionAtlas" id="Q61206">
    <property type="expression patterns" value="baseline and differential"/>
</dbReference>
<dbReference type="GO" id="GO:0008247">
    <property type="term" value="C:1-alkyl-2-acetylglycerophosphocholine esterase complex"/>
    <property type="evidence" value="ECO:0000250"/>
    <property type="project" value="UniProtKB"/>
</dbReference>
<dbReference type="GO" id="GO:0005737">
    <property type="term" value="C:cytoplasm"/>
    <property type="evidence" value="ECO:0000314"/>
    <property type="project" value="MGI"/>
</dbReference>
<dbReference type="GO" id="GO:0005829">
    <property type="term" value="C:cytosol"/>
    <property type="evidence" value="ECO:0007669"/>
    <property type="project" value="Ensembl"/>
</dbReference>
<dbReference type="GO" id="GO:0001650">
    <property type="term" value="C:fibrillar center"/>
    <property type="evidence" value="ECO:0007669"/>
    <property type="project" value="Ensembl"/>
</dbReference>
<dbReference type="GO" id="GO:0005886">
    <property type="term" value="C:plasma membrane"/>
    <property type="evidence" value="ECO:0007669"/>
    <property type="project" value="Ensembl"/>
</dbReference>
<dbReference type="GO" id="GO:0003847">
    <property type="term" value="F:1-alkyl-2-acetylglycerophosphocholine esterase activity"/>
    <property type="evidence" value="ECO:0000250"/>
    <property type="project" value="UniProtKB"/>
</dbReference>
<dbReference type="GO" id="GO:0047179">
    <property type="term" value="F:platelet-activating factor acetyltransferase activity"/>
    <property type="evidence" value="ECO:0007669"/>
    <property type="project" value="Ensembl"/>
</dbReference>
<dbReference type="GO" id="GO:0046982">
    <property type="term" value="F:protein heterodimerization activity"/>
    <property type="evidence" value="ECO:0000250"/>
    <property type="project" value="UniProtKB"/>
</dbReference>
<dbReference type="GO" id="GO:0042803">
    <property type="term" value="F:protein homodimerization activity"/>
    <property type="evidence" value="ECO:0000250"/>
    <property type="project" value="UniProtKB"/>
</dbReference>
<dbReference type="GO" id="GO:0044877">
    <property type="term" value="F:protein-containing complex binding"/>
    <property type="evidence" value="ECO:0007669"/>
    <property type="project" value="Ensembl"/>
</dbReference>
<dbReference type="GO" id="GO:0016042">
    <property type="term" value="P:lipid catabolic process"/>
    <property type="evidence" value="ECO:0007669"/>
    <property type="project" value="UniProtKB-KW"/>
</dbReference>
<dbReference type="GO" id="GO:0016239">
    <property type="term" value="P:positive regulation of macroautophagy"/>
    <property type="evidence" value="ECO:0007669"/>
    <property type="project" value="Ensembl"/>
</dbReference>
<dbReference type="GO" id="GO:0007283">
    <property type="term" value="P:spermatogenesis"/>
    <property type="evidence" value="ECO:0000315"/>
    <property type="project" value="UniProtKB"/>
</dbReference>
<dbReference type="CDD" id="cd01820">
    <property type="entry name" value="PAF_acetylesterase_like"/>
    <property type="match status" value="1"/>
</dbReference>
<dbReference type="FunFam" id="3.40.50.1110:FF:000004">
    <property type="entry name" value="Platelet-activating factor acetylhydrolase IB subunit beta"/>
    <property type="match status" value="1"/>
</dbReference>
<dbReference type="Gene3D" id="3.40.50.1110">
    <property type="entry name" value="SGNH hydrolase"/>
    <property type="match status" value="1"/>
</dbReference>
<dbReference type="InterPro" id="IPR013830">
    <property type="entry name" value="SGNH_hydro"/>
</dbReference>
<dbReference type="InterPro" id="IPR036514">
    <property type="entry name" value="SGNH_hydro_sf"/>
</dbReference>
<dbReference type="PANTHER" id="PTHR11852">
    <property type="entry name" value="PLATELET-ACTIVATING FACTOR ACETYLHYDROLASE"/>
    <property type="match status" value="1"/>
</dbReference>
<dbReference type="PANTHER" id="PTHR11852:SF1">
    <property type="entry name" value="PLATELET-ACTIVATING FACTOR ACETYLHYDROLASE IB SUBUNIT ALPHA2"/>
    <property type="match status" value="1"/>
</dbReference>
<dbReference type="Pfam" id="PF13472">
    <property type="entry name" value="Lipase_GDSL_2"/>
    <property type="match status" value="1"/>
</dbReference>
<dbReference type="SUPFAM" id="SSF52266">
    <property type="entry name" value="SGNH hydrolase"/>
    <property type="match status" value="1"/>
</dbReference>
<proteinExistence type="evidence at protein level"/>